<comment type="function">
    <text evidence="1">Catalyzes the GTP-dependent ribosomal translocation step during translation elongation. During this step, the ribosome changes from the pre-translocational (PRE) to the post-translocational (POST) state as the newly formed A-site-bound peptidyl-tRNA and P-site-bound deacylated tRNA move to the P and E sites, respectively. Catalyzes the coordinated movement of the two tRNA molecules, the mRNA and conformational changes in the ribosome.</text>
</comment>
<comment type="catalytic activity">
    <reaction evidence="1">
        <text>GTP + H2O = GDP + phosphate + H(+)</text>
        <dbReference type="Rhea" id="RHEA:19669"/>
        <dbReference type="ChEBI" id="CHEBI:15377"/>
        <dbReference type="ChEBI" id="CHEBI:15378"/>
        <dbReference type="ChEBI" id="CHEBI:37565"/>
        <dbReference type="ChEBI" id="CHEBI:43474"/>
        <dbReference type="ChEBI" id="CHEBI:58189"/>
    </reaction>
    <physiologicalReaction direction="left-to-right" evidence="1">
        <dbReference type="Rhea" id="RHEA:19670"/>
    </physiologicalReaction>
</comment>
<comment type="subcellular location">
    <subcellularLocation>
        <location evidence="3">Cytoplasm</location>
    </subcellularLocation>
</comment>
<comment type="miscellaneous">
    <text>Has antigenic properties.</text>
</comment>
<comment type="similarity">
    <text evidence="2">Belongs to the TRAFAC class translation factor GTPase superfamily. Classic translation factor GTPase family. EF-G/EF-2 subfamily.</text>
</comment>
<dbReference type="EC" id="3.6.5.-" evidence="1"/>
<dbReference type="EMBL" id="Y09664">
    <property type="protein sequence ID" value="CAA70857.2"/>
    <property type="molecule type" value="Genomic_DNA"/>
</dbReference>
<dbReference type="EMBL" id="CP017624">
    <property type="protein sequence ID" value="AOW27347.1"/>
    <property type="molecule type" value="Genomic_DNA"/>
</dbReference>
<dbReference type="RefSeq" id="XP_019330758.1">
    <property type="nucleotide sequence ID" value="XM_019475213.1"/>
</dbReference>
<dbReference type="SMR" id="Q5A0M4"/>
<dbReference type="BioGRID" id="1226092">
    <property type="interactions" value="3"/>
</dbReference>
<dbReference type="FunCoup" id="Q5A0M4">
    <property type="interactions" value="1287"/>
</dbReference>
<dbReference type="STRING" id="237561.Q5A0M4"/>
<dbReference type="MoonProt" id="Q5A0M4"/>
<dbReference type="EnsemblFungi" id="C2_03100W_A-T">
    <property type="protein sequence ID" value="C2_03100W_A-T-p1"/>
    <property type="gene ID" value="C2_03100W_A"/>
</dbReference>
<dbReference type="GeneID" id="3642998"/>
<dbReference type="KEGG" id="cal:CAALFM_C203100WA"/>
<dbReference type="CGD" id="CAL0000189676">
    <property type="gene designation" value="EFT2"/>
</dbReference>
<dbReference type="VEuPathDB" id="FungiDB:C2_03100W_A"/>
<dbReference type="eggNOG" id="KOG0469">
    <property type="taxonomic scope" value="Eukaryota"/>
</dbReference>
<dbReference type="HOGENOM" id="CLU_002794_11_2_1"/>
<dbReference type="InParanoid" id="Q5A0M4"/>
<dbReference type="OMA" id="ASWNTEN"/>
<dbReference type="OrthoDB" id="364892at2759"/>
<dbReference type="PRO" id="PR:Q5A0M4"/>
<dbReference type="Proteomes" id="UP000000559">
    <property type="component" value="Chromosome 2"/>
</dbReference>
<dbReference type="GO" id="GO:0009986">
    <property type="term" value="C:cell surface"/>
    <property type="evidence" value="ECO:0000314"/>
    <property type="project" value="CGD"/>
</dbReference>
<dbReference type="GO" id="GO:0005829">
    <property type="term" value="C:cytosol"/>
    <property type="evidence" value="ECO:0000318"/>
    <property type="project" value="GO_Central"/>
</dbReference>
<dbReference type="GO" id="GO:0016020">
    <property type="term" value="C:membrane"/>
    <property type="evidence" value="ECO:0000314"/>
    <property type="project" value="CGD"/>
</dbReference>
<dbReference type="GO" id="GO:0005886">
    <property type="term" value="C:plasma membrane"/>
    <property type="evidence" value="ECO:0000314"/>
    <property type="project" value="CGD"/>
</dbReference>
<dbReference type="GO" id="GO:1990904">
    <property type="term" value="C:ribonucleoprotein complex"/>
    <property type="evidence" value="ECO:0000318"/>
    <property type="project" value="GO_Central"/>
</dbReference>
<dbReference type="GO" id="GO:0030445">
    <property type="term" value="C:yeast-form cell wall"/>
    <property type="evidence" value="ECO:0000314"/>
    <property type="project" value="CGD"/>
</dbReference>
<dbReference type="GO" id="GO:0005525">
    <property type="term" value="F:GTP binding"/>
    <property type="evidence" value="ECO:0007669"/>
    <property type="project" value="UniProtKB-KW"/>
</dbReference>
<dbReference type="GO" id="GO:0003924">
    <property type="term" value="F:GTPase activity"/>
    <property type="evidence" value="ECO:0000314"/>
    <property type="project" value="CGD"/>
</dbReference>
<dbReference type="GO" id="GO:0043022">
    <property type="term" value="F:ribosome binding"/>
    <property type="evidence" value="ECO:0000318"/>
    <property type="project" value="GO_Central"/>
</dbReference>
<dbReference type="GO" id="GO:0003746">
    <property type="term" value="F:translation elongation factor activity"/>
    <property type="evidence" value="ECO:0000315"/>
    <property type="project" value="CGD"/>
</dbReference>
<dbReference type="GO" id="GO:0006414">
    <property type="term" value="P:translational elongation"/>
    <property type="evidence" value="ECO:0000318"/>
    <property type="project" value="GO_Central"/>
</dbReference>
<dbReference type="CDD" id="cd01681">
    <property type="entry name" value="aeEF2_snRNP_like_IV"/>
    <property type="match status" value="1"/>
</dbReference>
<dbReference type="CDD" id="cd04096">
    <property type="entry name" value="eEF2_snRNP_like_C"/>
    <property type="match status" value="1"/>
</dbReference>
<dbReference type="CDD" id="cd01885">
    <property type="entry name" value="EF2"/>
    <property type="match status" value="1"/>
</dbReference>
<dbReference type="CDD" id="cd16261">
    <property type="entry name" value="EF2_snRNP_III"/>
    <property type="match status" value="1"/>
</dbReference>
<dbReference type="CDD" id="cd03700">
    <property type="entry name" value="EF2_snRNP_like_II"/>
    <property type="match status" value="1"/>
</dbReference>
<dbReference type="FunFam" id="2.40.30.10:FF:000010">
    <property type="entry name" value="Translation elongation factor 2"/>
    <property type="match status" value="1"/>
</dbReference>
<dbReference type="FunFam" id="3.30.230.10:FF:000006">
    <property type="entry name" value="Translation elongation factor 2"/>
    <property type="match status" value="1"/>
</dbReference>
<dbReference type="FunFam" id="3.30.70.240:FF:000003">
    <property type="entry name" value="Translation elongation factor 2"/>
    <property type="match status" value="1"/>
</dbReference>
<dbReference type="FunFam" id="3.30.70.870:FF:000002">
    <property type="entry name" value="Translation elongation factor 2"/>
    <property type="match status" value="1"/>
</dbReference>
<dbReference type="FunFam" id="3.40.50.300:FF:000058">
    <property type="entry name" value="Translation elongation factor 2"/>
    <property type="match status" value="1"/>
</dbReference>
<dbReference type="Gene3D" id="3.30.230.10">
    <property type="match status" value="1"/>
</dbReference>
<dbReference type="Gene3D" id="3.30.70.240">
    <property type="match status" value="1"/>
</dbReference>
<dbReference type="Gene3D" id="3.30.70.870">
    <property type="entry name" value="Elongation Factor G (Translational Gtpase), domain 3"/>
    <property type="match status" value="1"/>
</dbReference>
<dbReference type="Gene3D" id="3.40.50.300">
    <property type="entry name" value="P-loop containing nucleotide triphosphate hydrolases"/>
    <property type="match status" value="1"/>
</dbReference>
<dbReference type="Gene3D" id="2.40.30.10">
    <property type="entry name" value="Translation factors"/>
    <property type="match status" value="1"/>
</dbReference>
<dbReference type="InterPro" id="IPR041095">
    <property type="entry name" value="EFG_II"/>
</dbReference>
<dbReference type="InterPro" id="IPR035647">
    <property type="entry name" value="EFG_III/V"/>
</dbReference>
<dbReference type="InterPro" id="IPR000640">
    <property type="entry name" value="EFG_V-like"/>
</dbReference>
<dbReference type="InterPro" id="IPR004161">
    <property type="entry name" value="EFTu-like_2"/>
</dbReference>
<dbReference type="InterPro" id="IPR031157">
    <property type="entry name" value="G_TR_CS"/>
</dbReference>
<dbReference type="InterPro" id="IPR027417">
    <property type="entry name" value="P-loop_NTPase"/>
</dbReference>
<dbReference type="InterPro" id="IPR020568">
    <property type="entry name" value="Ribosomal_Su5_D2-typ_SF"/>
</dbReference>
<dbReference type="InterPro" id="IPR014721">
    <property type="entry name" value="Ribsml_uS5_D2-typ_fold_subgr"/>
</dbReference>
<dbReference type="InterPro" id="IPR005225">
    <property type="entry name" value="Small_GTP-bd"/>
</dbReference>
<dbReference type="InterPro" id="IPR000795">
    <property type="entry name" value="T_Tr_GTP-bd_dom"/>
</dbReference>
<dbReference type="InterPro" id="IPR009000">
    <property type="entry name" value="Transl_B-barrel_sf"/>
</dbReference>
<dbReference type="InterPro" id="IPR005517">
    <property type="entry name" value="Transl_elong_EFG/EF2_IV"/>
</dbReference>
<dbReference type="NCBIfam" id="TIGR00231">
    <property type="entry name" value="small_GTP"/>
    <property type="match status" value="1"/>
</dbReference>
<dbReference type="PANTHER" id="PTHR42908:SF10">
    <property type="entry name" value="EUKARYOTIC TRANSLATION ELONGATION FACTOR 2"/>
    <property type="match status" value="1"/>
</dbReference>
<dbReference type="PANTHER" id="PTHR42908">
    <property type="entry name" value="TRANSLATION ELONGATION FACTOR-RELATED"/>
    <property type="match status" value="1"/>
</dbReference>
<dbReference type="Pfam" id="PF00679">
    <property type="entry name" value="EFG_C"/>
    <property type="match status" value="1"/>
</dbReference>
<dbReference type="Pfam" id="PF14492">
    <property type="entry name" value="EFG_III"/>
    <property type="match status" value="1"/>
</dbReference>
<dbReference type="Pfam" id="PF03764">
    <property type="entry name" value="EFG_IV"/>
    <property type="match status" value="1"/>
</dbReference>
<dbReference type="Pfam" id="PF00009">
    <property type="entry name" value="GTP_EFTU"/>
    <property type="match status" value="1"/>
</dbReference>
<dbReference type="Pfam" id="PF03144">
    <property type="entry name" value="GTP_EFTU_D2"/>
    <property type="match status" value="1"/>
</dbReference>
<dbReference type="PRINTS" id="PR00315">
    <property type="entry name" value="ELONGATNFCT"/>
</dbReference>
<dbReference type="SMART" id="SM00838">
    <property type="entry name" value="EFG_C"/>
    <property type="match status" value="1"/>
</dbReference>
<dbReference type="SMART" id="SM00889">
    <property type="entry name" value="EFG_IV"/>
    <property type="match status" value="1"/>
</dbReference>
<dbReference type="SUPFAM" id="SSF54980">
    <property type="entry name" value="EF-G C-terminal domain-like"/>
    <property type="match status" value="2"/>
</dbReference>
<dbReference type="SUPFAM" id="SSF52540">
    <property type="entry name" value="P-loop containing nucleoside triphosphate hydrolases"/>
    <property type="match status" value="1"/>
</dbReference>
<dbReference type="SUPFAM" id="SSF54211">
    <property type="entry name" value="Ribosomal protein S5 domain 2-like"/>
    <property type="match status" value="1"/>
</dbReference>
<dbReference type="SUPFAM" id="SSF50447">
    <property type="entry name" value="Translation proteins"/>
    <property type="match status" value="1"/>
</dbReference>
<dbReference type="PROSITE" id="PS00301">
    <property type="entry name" value="G_TR_1"/>
    <property type="match status" value="1"/>
</dbReference>
<dbReference type="PROSITE" id="PS51722">
    <property type="entry name" value="G_TR_2"/>
    <property type="match status" value="1"/>
</dbReference>
<keyword id="KW-0963">Cytoplasm</keyword>
<keyword id="KW-0903">Direct protein sequencing</keyword>
<keyword id="KW-0251">Elongation factor</keyword>
<keyword id="KW-0342">GTP-binding</keyword>
<keyword id="KW-0378">Hydrolase</keyword>
<keyword id="KW-0547">Nucleotide-binding</keyword>
<keyword id="KW-0648">Protein biosynthesis</keyword>
<keyword id="KW-1185">Reference proteome</keyword>
<name>EF2_CANAL</name>
<feature type="chain" id="PRO_0000091015" description="Elongation factor 2">
    <location>
        <begin position="1"/>
        <end position="842"/>
    </location>
</feature>
<feature type="domain" description="tr-type G" evidence="2">
    <location>
        <begin position="17"/>
        <end position="346"/>
    </location>
</feature>
<feature type="binding site" evidence="1">
    <location>
        <begin position="26"/>
        <end position="33"/>
    </location>
    <ligand>
        <name>GTP</name>
        <dbReference type="ChEBI" id="CHEBI:37565"/>
    </ligand>
</feature>
<feature type="binding site" evidence="1">
    <location>
        <begin position="158"/>
        <end position="161"/>
    </location>
    <ligand>
        <name>GTP</name>
        <dbReference type="ChEBI" id="CHEBI:37565"/>
    </ligand>
</feature>
<feature type="binding site" evidence="1">
    <location>
        <begin position="213"/>
        <end position="215"/>
    </location>
    <ligand>
        <name>GTP</name>
        <dbReference type="ChEBI" id="CHEBI:37565"/>
    </ligand>
</feature>
<feature type="modified residue" description="Diphthamide" evidence="1">
    <location>
        <position position="699"/>
    </location>
</feature>
<protein>
    <recommendedName>
        <fullName>Elongation factor 2</fullName>
        <shortName>EF-2</shortName>
        <ecNumber evidence="1">3.6.5.-</ecNumber>
    </recommendedName>
</protein>
<evidence type="ECO:0000250" key="1">
    <source>
        <dbReference type="UniProtKB" id="P32324"/>
    </source>
</evidence>
<evidence type="ECO:0000255" key="2">
    <source>
        <dbReference type="PROSITE-ProRule" id="PRU01059"/>
    </source>
</evidence>
<evidence type="ECO:0000269" key="3">
    <source>
    </source>
</evidence>
<organism>
    <name type="scientific">Candida albicans (strain SC5314 / ATCC MYA-2876)</name>
    <name type="common">Yeast</name>
    <dbReference type="NCBI Taxonomy" id="237561"/>
    <lineage>
        <taxon>Eukaryota</taxon>
        <taxon>Fungi</taxon>
        <taxon>Dikarya</taxon>
        <taxon>Ascomycota</taxon>
        <taxon>Saccharomycotina</taxon>
        <taxon>Pichiomycetes</taxon>
        <taxon>Debaryomycetaceae</taxon>
        <taxon>Candida/Lodderomyces clade</taxon>
        <taxon>Candida</taxon>
    </lineage>
</organism>
<accession>Q5A0M4</accession>
<accession>A0A1D8PGT9</accession>
<accession>O13430</accession>
<accession>Q9P4S4</accession>
<gene>
    <name type="primary">EFT2</name>
    <name type="ordered locus">CAALFM_C203100WA</name>
    <name type="ORF">CaO19.13210</name>
    <name type="ORF">CaO19.5788</name>
</gene>
<sequence length="842" mass="93354">MVAFTIEQIRGLMDKVTNVRNMSVIAHVDHGKSTLSDSLVQKAGIISAAKAGDARFMDTRKDEQERGITIKSTAISLYASMTDEDVKDIKQKTDGNSFLVNLIDSPGHVDFSSEVTAALRVTDGALVVVDTVEGVCVQTETVLRQALGERIKPVVVINKVDRALLELQTTKEDLYQTFARTVESVNVIISTYCDPVLGDVQVYPQKGTVAFASGLHGWAFTVRQFANKYSKKFGVDKEKMMERLWGDSYFNPKTKKWTNKDKDADGKPLERAFNMFILDPIFRLFAAIMNFKKDEIPVLLEKLEIQLKGDEKDLEGKALLKVVMRKFLPAADALLEMIVLHLPSPVTAQAYRAETLYEGPSDDPFCTAIRNCDPNADLMLYVSKMVPTSDKGRFYAFGRVFAGTVKSGQKVRIQGPNYQVGKKEDLFLKSIQRTVLMMGRSVEQIDDCPAGNIIGLVGIDQFLLKSGTITTNEAAHNMKVMKFSVSPVVQVAVEVKNANDLPKLVEGLKRLSKSDPCVLTYMSESGEHIVAGTGELHLEICLQDLENDHAGVPLRISPPVVSYRETVEGESSMVALSKSPNKHNRIYVKAQPIDEEVSLDIENGVINPRDDFKARARILADKHGWDVVDARKIWCFGPDGNGPNLVVDQTKAVQYLNEIKDSVVAAFQWATKEGPIFGENCRSVRVNILDVTLHADAIHRGGGQIIPTMRRVTYASMLLAEPAIQEPVFLVEIQCPENAIGGIYSVLNKKRGQVISEEQRPGTPLFTVKAYLPVNESFGFTGELRQATGGQAFPQLIFDHWQVMSGDVTDENSKPGAIVKEKRVRAGLKPEVPEYTEYYDKL</sequence>
<proteinExistence type="evidence at protein level"/>
<reference key="1">
    <citation type="submission" date="1997-11" db="EMBL/GenBank/DDBJ databases">
        <authorList>
            <person name="Capa L."/>
            <person name="Mendoza A."/>
            <person name="Serramia M.J."/>
            <person name="Garcia-Bustos J.F."/>
        </authorList>
    </citation>
    <scope>NUCLEOTIDE SEQUENCE [GENOMIC DNA]</scope>
    <source>
        <strain>ATCC 10261 / CBS 2718 / NBRC 1061</strain>
    </source>
</reference>
<reference key="2">
    <citation type="journal article" date="2004" name="Proc. Natl. Acad. Sci. U.S.A.">
        <title>The diploid genome sequence of Candida albicans.</title>
        <authorList>
            <person name="Jones T."/>
            <person name="Federspiel N.A."/>
            <person name="Chibana H."/>
            <person name="Dungan J."/>
            <person name="Kalman S."/>
            <person name="Magee B.B."/>
            <person name="Newport G."/>
            <person name="Thorstenson Y.R."/>
            <person name="Agabian N."/>
            <person name="Magee P.T."/>
            <person name="Davis R.W."/>
            <person name="Scherer S."/>
        </authorList>
    </citation>
    <scope>NUCLEOTIDE SEQUENCE [LARGE SCALE GENOMIC DNA]</scope>
    <source>
        <strain>SC5314 / ATCC MYA-2876</strain>
    </source>
</reference>
<reference key="3">
    <citation type="journal article" date="2007" name="Genome Biol.">
        <title>Assembly of the Candida albicans genome into sixteen supercontigs aligned on the eight chromosomes.</title>
        <authorList>
            <person name="van het Hoog M."/>
            <person name="Rast T.J."/>
            <person name="Martchenko M."/>
            <person name="Grindle S."/>
            <person name="Dignard D."/>
            <person name="Hogues H."/>
            <person name="Cuomo C."/>
            <person name="Berriman M."/>
            <person name="Scherer S."/>
            <person name="Magee B.B."/>
            <person name="Whiteway M."/>
            <person name="Chibana H."/>
            <person name="Nantel A."/>
            <person name="Magee P.T."/>
        </authorList>
    </citation>
    <scope>GENOME REANNOTATION</scope>
    <source>
        <strain>SC5314 / ATCC MYA-2876</strain>
    </source>
</reference>
<reference key="4">
    <citation type="journal article" date="2013" name="Genome Biol.">
        <title>Assembly of a phased diploid Candida albicans genome facilitates allele-specific measurements and provides a simple model for repeat and indel structure.</title>
        <authorList>
            <person name="Muzzey D."/>
            <person name="Schwartz K."/>
            <person name="Weissman J.S."/>
            <person name="Sherlock G."/>
        </authorList>
    </citation>
    <scope>NUCLEOTIDE SEQUENCE [LARGE SCALE GENOMIC DNA]</scope>
    <scope>GENOME REANNOTATION</scope>
    <source>
        <strain>SC5314 / ATCC MYA-2876</strain>
    </source>
</reference>
<reference key="5">
    <citation type="journal article" date="2004" name="Proteomics">
        <title>Proteomics-based identification of novel Candida albicans antigens for diagnosis of systemic candidiasis in patients with underlying hematological malignancies.</title>
        <authorList>
            <person name="Pitarch A."/>
            <person name="Abian J."/>
            <person name="Carrascal M."/>
            <person name="Sanchez M."/>
            <person name="Nombela C."/>
            <person name="Gil C."/>
        </authorList>
    </citation>
    <scope>PROTEIN SEQUENCE OF 559-564; 581-585 AND 675-682</scope>
    <scope>SUBCELLULAR LOCATION</scope>
    <scope>ANTIGENICITY</scope>
    <source>
        <strain>SC5314 / ATCC MYA-2876</strain>
        <tissue>Protoplast</tissue>
    </source>
</reference>